<dbReference type="EC" id="6.5.1.2" evidence="1"/>
<dbReference type="EMBL" id="AY596297">
    <property type="protein sequence ID" value="AAV47769.1"/>
    <property type="molecule type" value="Genomic_DNA"/>
</dbReference>
<dbReference type="RefSeq" id="WP_011224586.1">
    <property type="nucleotide sequence ID" value="NC_006396.1"/>
</dbReference>
<dbReference type="SMR" id="Q5UY84"/>
<dbReference type="STRING" id="272569.rrnAC3049"/>
<dbReference type="PaxDb" id="272569-rrnAC3049"/>
<dbReference type="EnsemblBacteria" id="AAV47769">
    <property type="protein sequence ID" value="AAV47769"/>
    <property type="gene ID" value="rrnAC3049"/>
</dbReference>
<dbReference type="GeneID" id="40153869"/>
<dbReference type="KEGG" id="hma:rrnAC3049"/>
<dbReference type="PATRIC" id="fig|272569.17.peg.3598"/>
<dbReference type="eggNOG" id="arCOG04754">
    <property type="taxonomic scope" value="Archaea"/>
</dbReference>
<dbReference type="HOGENOM" id="CLU_007764_2_1_2"/>
<dbReference type="Proteomes" id="UP000001169">
    <property type="component" value="Chromosome I"/>
</dbReference>
<dbReference type="GO" id="GO:0003677">
    <property type="term" value="F:DNA binding"/>
    <property type="evidence" value="ECO:0007669"/>
    <property type="project" value="InterPro"/>
</dbReference>
<dbReference type="GO" id="GO:0003911">
    <property type="term" value="F:DNA ligase (NAD+) activity"/>
    <property type="evidence" value="ECO:0007669"/>
    <property type="project" value="UniProtKB-UniRule"/>
</dbReference>
<dbReference type="GO" id="GO:0046872">
    <property type="term" value="F:metal ion binding"/>
    <property type="evidence" value="ECO:0007669"/>
    <property type="project" value="UniProtKB-KW"/>
</dbReference>
<dbReference type="GO" id="GO:0006281">
    <property type="term" value="P:DNA repair"/>
    <property type="evidence" value="ECO:0007669"/>
    <property type="project" value="UniProtKB-KW"/>
</dbReference>
<dbReference type="GO" id="GO:0006260">
    <property type="term" value="P:DNA replication"/>
    <property type="evidence" value="ECO:0007669"/>
    <property type="project" value="UniProtKB-KW"/>
</dbReference>
<dbReference type="CDD" id="cd17748">
    <property type="entry name" value="BRCT_DNA_ligase_like"/>
    <property type="match status" value="1"/>
</dbReference>
<dbReference type="CDD" id="cd00114">
    <property type="entry name" value="LIGANc"/>
    <property type="match status" value="1"/>
</dbReference>
<dbReference type="FunFam" id="1.10.150.20:FF:000007">
    <property type="entry name" value="DNA ligase"/>
    <property type="match status" value="1"/>
</dbReference>
<dbReference type="FunFam" id="3.30.470.30:FF:000001">
    <property type="entry name" value="DNA ligase"/>
    <property type="match status" value="1"/>
</dbReference>
<dbReference type="Gene3D" id="6.20.10.30">
    <property type="match status" value="1"/>
</dbReference>
<dbReference type="Gene3D" id="1.10.150.20">
    <property type="entry name" value="5' to 3' exonuclease, C-terminal subdomain"/>
    <property type="match status" value="2"/>
</dbReference>
<dbReference type="Gene3D" id="3.40.50.10190">
    <property type="entry name" value="BRCT domain"/>
    <property type="match status" value="1"/>
</dbReference>
<dbReference type="Gene3D" id="3.30.470.30">
    <property type="entry name" value="DNA ligase/mRNA capping enzyme"/>
    <property type="match status" value="1"/>
</dbReference>
<dbReference type="Gene3D" id="1.10.287.610">
    <property type="entry name" value="Helix hairpin bin"/>
    <property type="match status" value="1"/>
</dbReference>
<dbReference type="Gene3D" id="2.40.50.140">
    <property type="entry name" value="Nucleic acid-binding proteins"/>
    <property type="match status" value="1"/>
</dbReference>
<dbReference type="HAMAP" id="MF_01588">
    <property type="entry name" value="DNA_ligase_A"/>
    <property type="match status" value="1"/>
</dbReference>
<dbReference type="InterPro" id="IPR001357">
    <property type="entry name" value="BRCT_dom"/>
</dbReference>
<dbReference type="InterPro" id="IPR036420">
    <property type="entry name" value="BRCT_dom_sf"/>
</dbReference>
<dbReference type="InterPro" id="IPR041663">
    <property type="entry name" value="DisA/LigA_HHH"/>
</dbReference>
<dbReference type="InterPro" id="IPR001679">
    <property type="entry name" value="DNA_ligase"/>
</dbReference>
<dbReference type="InterPro" id="IPR033136">
    <property type="entry name" value="DNA_ligase_CS"/>
</dbReference>
<dbReference type="InterPro" id="IPR013839">
    <property type="entry name" value="DNAligase_adenylation"/>
</dbReference>
<dbReference type="InterPro" id="IPR013840">
    <property type="entry name" value="DNAligase_N"/>
</dbReference>
<dbReference type="InterPro" id="IPR003583">
    <property type="entry name" value="Hlx-hairpin-Hlx_DNA-bd_motif"/>
</dbReference>
<dbReference type="InterPro" id="IPR012340">
    <property type="entry name" value="NA-bd_OB-fold"/>
</dbReference>
<dbReference type="InterPro" id="IPR004150">
    <property type="entry name" value="NAD_DNA_ligase_OB"/>
</dbReference>
<dbReference type="InterPro" id="IPR010994">
    <property type="entry name" value="RuvA_2-like"/>
</dbReference>
<dbReference type="NCBIfam" id="TIGR00575">
    <property type="entry name" value="dnlj"/>
    <property type="match status" value="1"/>
</dbReference>
<dbReference type="NCBIfam" id="NF005932">
    <property type="entry name" value="PRK07956.1"/>
    <property type="match status" value="1"/>
</dbReference>
<dbReference type="NCBIfam" id="NF010931">
    <property type="entry name" value="PRK14351.1"/>
    <property type="match status" value="1"/>
</dbReference>
<dbReference type="PANTHER" id="PTHR23389">
    <property type="entry name" value="CHROMOSOME TRANSMISSION FIDELITY FACTOR 18"/>
    <property type="match status" value="1"/>
</dbReference>
<dbReference type="PANTHER" id="PTHR23389:SF9">
    <property type="entry name" value="DNA LIGASE"/>
    <property type="match status" value="1"/>
</dbReference>
<dbReference type="Pfam" id="PF00533">
    <property type="entry name" value="BRCT"/>
    <property type="match status" value="1"/>
</dbReference>
<dbReference type="Pfam" id="PF01653">
    <property type="entry name" value="DNA_ligase_aden"/>
    <property type="match status" value="1"/>
</dbReference>
<dbReference type="Pfam" id="PF03120">
    <property type="entry name" value="DNA_ligase_OB"/>
    <property type="match status" value="1"/>
</dbReference>
<dbReference type="Pfam" id="PF12826">
    <property type="entry name" value="HHH_2"/>
    <property type="match status" value="1"/>
</dbReference>
<dbReference type="Pfam" id="PF14520">
    <property type="entry name" value="HHH_5"/>
    <property type="match status" value="1"/>
</dbReference>
<dbReference type="PIRSF" id="PIRSF001604">
    <property type="entry name" value="LigA"/>
    <property type="match status" value="1"/>
</dbReference>
<dbReference type="SMART" id="SM00292">
    <property type="entry name" value="BRCT"/>
    <property type="match status" value="1"/>
</dbReference>
<dbReference type="SMART" id="SM00278">
    <property type="entry name" value="HhH1"/>
    <property type="match status" value="4"/>
</dbReference>
<dbReference type="SMART" id="SM00532">
    <property type="entry name" value="LIGANc"/>
    <property type="match status" value="1"/>
</dbReference>
<dbReference type="SUPFAM" id="SSF52113">
    <property type="entry name" value="BRCT domain"/>
    <property type="match status" value="1"/>
</dbReference>
<dbReference type="SUPFAM" id="SSF56091">
    <property type="entry name" value="DNA ligase/mRNA capping enzyme, catalytic domain"/>
    <property type="match status" value="1"/>
</dbReference>
<dbReference type="SUPFAM" id="SSF50249">
    <property type="entry name" value="Nucleic acid-binding proteins"/>
    <property type="match status" value="1"/>
</dbReference>
<dbReference type="SUPFAM" id="SSF47781">
    <property type="entry name" value="RuvA domain 2-like"/>
    <property type="match status" value="1"/>
</dbReference>
<dbReference type="PROSITE" id="PS50172">
    <property type="entry name" value="BRCT"/>
    <property type="match status" value="1"/>
</dbReference>
<dbReference type="PROSITE" id="PS01056">
    <property type="entry name" value="DNA_LIGASE_N2"/>
    <property type="match status" value="1"/>
</dbReference>
<protein>
    <recommendedName>
        <fullName evidence="1">DNA ligase</fullName>
        <ecNumber evidence="1">6.5.1.2</ecNumber>
    </recommendedName>
    <alternativeName>
        <fullName evidence="1">Polydeoxyribonucleotide synthase [NAD(+)]</fullName>
    </alternativeName>
</protein>
<proteinExistence type="inferred from homology"/>
<comment type="function">
    <text evidence="1">DNA ligase that catalyzes the formation of phosphodiester linkages between 5'-phosphoryl and 3'-hydroxyl groups in double-stranded DNA using NAD as a coenzyme and as the energy source for the reaction. It is essential for DNA replication and repair of damaged DNA.</text>
</comment>
<comment type="catalytic activity">
    <reaction evidence="1">
        <text>NAD(+) + (deoxyribonucleotide)n-3'-hydroxyl + 5'-phospho-(deoxyribonucleotide)m = (deoxyribonucleotide)n+m + AMP + beta-nicotinamide D-nucleotide.</text>
        <dbReference type="EC" id="6.5.1.2"/>
    </reaction>
</comment>
<comment type="cofactor">
    <cofactor evidence="1">
        <name>Mg(2+)</name>
        <dbReference type="ChEBI" id="CHEBI:18420"/>
    </cofactor>
    <cofactor evidence="1">
        <name>Mn(2+)</name>
        <dbReference type="ChEBI" id="CHEBI:29035"/>
    </cofactor>
</comment>
<comment type="similarity">
    <text evidence="1">Belongs to the NAD-dependent DNA ligase family. LigA subfamily.</text>
</comment>
<evidence type="ECO:0000255" key="1">
    <source>
        <dbReference type="HAMAP-Rule" id="MF_01588"/>
    </source>
</evidence>
<evidence type="ECO:0000256" key="2">
    <source>
        <dbReference type="SAM" id="MobiDB-lite"/>
    </source>
</evidence>
<reference key="1">
    <citation type="journal article" date="2004" name="Genome Res.">
        <title>Genome sequence of Haloarcula marismortui: a halophilic archaeon from the Dead Sea.</title>
        <authorList>
            <person name="Baliga N.S."/>
            <person name="Bonneau R."/>
            <person name="Facciotti M.T."/>
            <person name="Pan M."/>
            <person name="Glusman G."/>
            <person name="Deutsch E.W."/>
            <person name="Shannon P."/>
            <person name="Chiu Y."/>
            <person name="Weng R.S."/>
            <person name="Gan R.R."/>
            <person name="Hung P."/>
            <person name="Date S.V."/>
            <person name="Marcotte E."/>
            <person name="Hood L."/>
            <person name="Ng W.V."/>
        </authorList>
    </citation>
    <scope>NUCLEOTIDE SEQUENCE [LARGE SCALE GENOMIC DNA]</scope>
    <source>
        <strain>ATCC 43049 / DSM 3752 / JCM 8966 / VKM B-1809</strain>
    </source>
</reference>
<keyword id="KW-0227">DNA damage</keyword>
<keyword id="KW-0234">DNA repair</keyword>
<keyword id="KW-0235">DNA replication</keyword>
<keyword id="KW-0436">Ligase</keyword>
<keyword id="KW-0460">Magnesium</keyword>
<keyword id="KW-0464">Manganese</keyword>
<keyword id="KW-0479">Metal-binding</keyword>
<keyword id="KW-0520">NAD</keyword>
<keyword id="KW-1185">Reference proteome</keyword>
<keyword id="KW-0862">Zinc</keyword>
<organism>
    <name type="scientific">Haloarcula marismortui (strain ATCC 43049 / DSM 3752 / JCM 8966 / VKM B-1809)</name>
    <name type="common">Halobacterium marismortui</name>
    <dbReference type="NCBI Taxonomy" id="272569"/>
    <lineage>
        <taxon>Archaea</taxon>
        <taxon>Methanobacteriati</taxon>
        <taxon>Methanobacteriota</taxon>
        <taxon>Stenosarchaea group</taxon>
        <taxon>Halobacteria</taxon>
        <taxon>Halobacteriales</taxon>
        <taxon>Haloarculaceae</taxon>
        <taxon>Haloarcula</taxon>
    </lineage>
</organism>
<accession>Q5UY84</accession>
<sequence>MTTAEDVAGNPYISDPRTDFESVEDVDAETAREQADQLREALRYHDYRYYVENDPVIGDRAYDALFSRLQRLESAFNLDTDGSPTQRVGGEPLDELPDVEHVARMGSIDQGGEEADVREFDSRVRNGLDGDVQYFCEPKFDGLSVEIVYEDGVYQRAATRGDGEVGEDVTENVRTISSVPQRLRGDYPDFLAVRGEVYIPRDAFTTFNRERVERGEDPFANPRNAAAGTLRQLDPSVTAERPLSIFFFGVLDASVDFESHSELHERFPEWGLRVCDRTAVVDDIDAAIDYRNEQQQARDDLDYEIDGVVIKVDDMDACDDLGSTARAPRWAFAYKFPARKEETTVRDIVVQVGRTGRLTPVALMDPVEVGGVTVSRASLHNPSLIADLGVDVGDRVRIKRAGDVIPDVVEVLDDDGDGHFEFPETCPACDSPVEHDGPMAFCTGGLTCPAQRERSVEHYASRDALDIEGVGEKAVQQLLDAGLVSDPADLYDLTVEDLTGLEGWGETSARNLVDGMDSAREPPLADFLVALGIPEVGTVTARNLAQEFGTFEAILDAADEGDTDAFEAVPDVGQTVARSIVEFFEGEGNRAVIDRLLDHVEPQAAEETDGDALDGQTFVFTGSLDGYTRGEAQELVERNDGSATSSVSGNTDYLVLGDNPGQRKQDDAAAHDVETLTEDEFEELLDDAGVL</sequence>
<gene>
    <name evidence="1" type="primary">ligA</name>
    <name type="ordered locus">rrnAC3049</name>
</gene>
<name>DNLJ_HALMA</name>
<feature type="chain" id="PRO_0000313531" description="DNA ligase">
    <location>
        <begin position="1"/>
        <end position="691"/>
    </location>
</feature>
<feature type="domain" description="BRCT" evidence="1">
    <location>
        <begin position="608"/>
        <end position="691"/>
    </location>
</feature>
<feature type="region of interest" description="Disordered" evidence="2">
    <location>
        <begin position="1"/>
        <end position="22"/>
    </location>
</feature>
<feature type="region of interest" description="Disordered" evidence="2">
    <location>
        <begin position="637"/>
        <end position="667"/>
    </location>
</feature>
<feature type="compositionally biased region" description="Polar residues" evidence="2">
    <location>
        <begin position="641"/>
        <end position="651"/>
    </location>
</feature>
<feature type="active site" description="N6-AMP-lysine intermediate" evidence="1">
    <location>
        <position position="139"/>
    </location>
</feature>
<feature type="binding site" evidence="1">
    <location>
        <begin position="59"/>
        <end position="63"/>
    </location>
    <ligand>
        <name>NAD(+)</name>
        <dbReference type="ChEBI" id="CHEBI:57540"/>
    </ligand>
</feature>
<feature type="binding site" evidence="1">
    <location>
        <begin position="107"/>
        <end position="108"/>
    </location>
    <ligand>
        <name>NAD(+)</name>
        <dbReference type="ChEBI" id="CHEBI:57540"/>
    </ligand>
</feature>
<feature type="binding site" evidence="1">
    <location>
        <position position="137"/>
    </location>
    <ligand>
        <name>NAD(+)</name>
        <dbReference type="ChEBI" id="CHEBI:57540"/>
    </ligand>
</feature>
<feature type="binding site" evidence="1">
    <location>
        <position position="160"/>
    </location>
    <ligand>
        <name>NAD(+)</name>
        <dbReference type="ChEBI" id="CHEBI:57540"/>
    </ligand>
</feature>
<feature type="binding site" evidence="1">
    <location>
        <position position="196"/>
    </location>
    <ligand>
        <name>NAD(+)</name>
        <dbReference type="ChEBI" id="CHEBI:57540"/>
    </ligand>
</feature>
<feature type="binding site" evidence="1">
    <location>
        <position position="311"/>
    </location>
    <ligand>
        <name>NAD(+)</name>
        <dbReference type="ChEBI" id="CHEBI:57540"/>
    </ligand>
</feature>
<feature type="binding site" evidence="1">
    <location>
        <position position="335"/>
    </location>
    <ligand>
        <name>NAD(+)</name>
        <dbReference type="ChEBI" id="CHEBI:57540"/>
    </ligand>
</feature>
<feature type="binding site" evidence="1">
    <location>
        <position position="426"/>
    </location>
    <ligand>
        <name>Zn(2+)</name>
        <dbReference type="ChEBI" id="CHEBI:29105"/>
    </ligand>
</feature>
<feature type="binding site" evidence="1">
    <location>
        <position position="429"/>
    </location>
    <ligand>
        <name>Zn(2+)</name>
        <dbReference type="ChEBI" id="CHEBI:29105"/>
    </ligand>
</feature>
<feature type="binding site" evidence="1">
    <location>
        <position position="442"/>
    </location>
    <ligand>
        <name>Zn(2+)</name>
        <dbReference type="ChEBI" id="CHEBI:29105"/>
    </ligand>
</feature>
<feature type="binding site" evidence="1">
    <location>
        <position position="448"/>
    </location>
    <ligand>
        <name>Zn(2+)</name>
        <dbReference type="ChEBI" id="CHEBI:29105"/>
    </ligand>
</feature>